<evidence type="ECO:0000269" key="1">
    <source>
    </source>
</evidence>
<evidence type="ECO:0000269" key="2">
    <source>
    </source>
</evidence>
<evidence type="ECO:0000269" key="3">
    <source>
    </source>
</evidence>
<evidence type="ECO:0000305" key="4"/>
<reference key="1">
    <citation type="journal article" date="1992" name="J. Gen. Virol.">
        <title>Complete nucleotide sequence of RNA 4 of rice stripe virus isolate T, and comparison with another isolate and with maize stripe virus.</title>
        <authorList>
            <person name="Zhu Y.F."/>
            <person name="Hayakawa T."/>
            <person name="Toriyama S."/>
        </authorList>
    </citation>
    <scope>NUCLEOTIDE SEQUENCE [GENOMIC RNA]</scope>
</reference>
<reference key="2">
    <citation type="journal article" date="2005" name="Virus Genes">
        <title>Nucleic acid binding property of the gene products of rice stripe virus.</title>
        <authorList>
            <person name="Liang D."/>
            <person name="Ma X."/>
            <person name="Qu Z."/>
            <person name="Hull R."/>
        </authorList>
    </citation>
    <scope>RNA-BINDING</scope>
</reference>
<reference key="3">
    <citation type="journal article" date="2005" name="Virus Genes">
        <title>Detection and localization of Rice stripe virus gene products in vivo.</title>
        <authorList>
            <person name="Liang D."/>
            <person name="Qu Z."/>
            <person name="Ma X."/>
            <person name="Hull R."/>
        </authorList>
    </citation>
    <scope>SUBCELLULAR LOCATION</scope>
</reference>
<reference key="4">
    <citation type="journal article" date="2008" name="J. Virol.">
        <title>Identification of a movement protein of the tenuivirus rice stripe virus.</title>
        <authorList>
            <person name="Xiong R."/>
            <person name="Wu J."/>
            <person name="Zhou Y."/>
            <person name="Zhou X."/>
        </authorList>
    </citation>
    <scope>FUNCTION</scope>
</reference>
<reference key="5">
    <citation type="journal article" date="2009" name="Virus Genes">
        <title>Pc4, a putative movement protein of Rice stripe virus, interacts with a type I DnaJ protein and a small Hsp of rice.</title>
        <authorList>
            <person name="Lu L."/>
            <person name="Du Z."/>
            <person name="Qin M."/>
            <person name="Wang P."/>
            <person name="Lan H."/>
            <person name="Niu X."/>
            <person name="Jia D."/>
            <person name="Xie L."/>
            <person name="Lin Q."/>
            <person name="Xie L."/>
            <person name="Wu Z."/>
        </authorList>
    </citation>
    <scope>INTERACTION WITH RICE DJA6 AND HSP17.9A</scope>
</reference>
<name>MVP_RSVT</name>
<proteinExistence type="evidence at protein level"/>
<organismHost>
    <name type="scientific">Avena sativa</name>
    <name type="common">Oat</name>
    <dbReference type="NCBI Taxonomy" id="4498"/>
</organismHost>
<organismHost>
    <name type="scientific">Digitaria</name>
    <dbReference type="NCBI Taxonomy" id="66017"/>
</organismHost>
<organismHost>
    <name type="scientific">Eragrostis</name>
    <dbReference type="NCBI Taxonomy" id="38413"/>
</organismHost>
<organismHost>
    <name type="scientific">Hordeum vulgare</name>
    <name type="common">Barley</name>
    <dbReference type="NCBI Taxonomy" id="4513"/>
</organismHost>
<organismHost>
    <name type="scientific">Oryza sativa</name>
    <name type="common">Rice</name>
    <dbReference type="NCBI Taxonomy" id="4530"/>
</organismHost>
<organismHost>
    <name type="scientific">Setaria italica</name>
    <name type="common">Foxtail millet</name>
    <name type="synonym">Panicum italicum</name>
    <dbReference type="NCBI Taxonomy" id="4555"/>
</organismHost>
<organismHost>
    <name type="scientific">Setaria viridis</name>
    <name type="common">Green bristlegrass</name>
    <name type="synonym">Setaria italica subsp. viridis</name>
    <dbReference type="NCBI Taxonomy" id="4556"/>
</organismHost>
<organismHost>
    <name type="scientific">Triticum aestivum</name>
    <name type="common">Wheat</name>
    <dbReference type="NCBI Taxonomy" id="4565"/>
</organismHost>
<organismHost>
    <name type="scientific">Zea mays</name>
    <name type="common">Maize</name>
    <dbReference type="NCBI Taxonomy" id="4577"/>
</organismHost>
<comment type="function">
    <text evidence="2">Transports viral genome to neighboring plant cells directly through plasmosdesmata, without any budding. The movement protein allows efficient cell to cell propagation, by bypassing the host cell wall barrier.</text>
</comment>
<comment type="subunit">
    <text evidence="3">Interacts with the rice proteins DJA6 and HSP17.9A.</text>
</comment>
<comment type="subcellular location">
    <subcellularLocation>
        <location evidence="1">Host cytoplasm</location>
    </subcellularLocation>
</comment>
<comment type="similarity">
    <text evidence="4">Belongs to the tenuiviruses pc4 protein family.</text>
</comment>
<dbReference type="EMBL" id="D10979">
    <property type="protein sequence ID" value="BAA01754.1"/>
    <property type="molecule type" value="Genomic_RNA"/>
</dbReference>
<dbReference type="PIR" id="JQ1548">
    <property type="entry name" value="JQ1548"/>
</dbReference>
<dbReference type="KEGG" id="vg:962682"/>
<dbReference type="Proteomes" id="UP000006677">
    <property type="component" value="Genome"/>
</dbReference>
<dbReference type="GO" id="GO:0030430">
    <property type="term" value="C:host cell cytoplasm"/>
    <property type="evidence" value="ECO:0007669"/>
    <property type="project" value="UniProtKB-SubCell"/>
</dbReference>
<dbReference type="GO" id="GO:0003723">
    <property type="term" value="F:RNA binding"/>
    <property type="evidence" value="ECO:0007669"/>
    <property type="project" value="UniProtKB-KW"/>
</dbReference>
<dbReference type="GO" id="GO:0046740">
    <property type="term" value="P:transport of virus in host, cell to cell"/>
    <property type="evidence" value="ECO:0007669"/>
    <property type="project" value="UniProtKB-KW"/>
</dbReference>
<dbReference type="InterPro" id="IPR004980">
    <property type="entry name" value="Tenui_NS4"/>
</dbReference>
<dbReference type="Pfam" id="PF03300">
    <property type="entry name" value="Tenui_NS4"/>
    <property type="match status" value="1"/>
</dbReference>
<protein>
    <recommendedName>
        <fullName>Movement protein</fullName>
    </recommendedName>
    <alternativeName>
        <fullName>Non-structural protein 4</fullName>
        <shortName>NS4</shortName>
    </alternativeName>
    <alternativeName>
        <fullName>Protein pc4</fullName>
    </alternativeName>
</protein>
<feature type="chain" id="PRO_0000222532" description="Movement protein">
    <location>
        <begin position="1"/>
        <end position="286"/>
    </location>
</feature>
<accession>Q00847</accession>
<keyword id="KW-1035">Host cytoplasm</keyword>
<keyword id="KW-0945">Host-virus interaction</keyword>
<keyword id="KW-1185">Reference proteome</keyword>
<keyword id="KW-0694">RNA-binding</keyword>
<keyword id="KW-0813">Transport</keyword>
<keyword id="KW-0916">Viral movement protein</keyword>
<sequence length="286" mass="32475">MALSRLLSTLKSKVLYDDLSEESQKRVDNKNRKSLALSKRPLNQGRVTIDQAATMLGLEPFSFSDVKVNKYDMFIAKQDYSVKAHRKATFNILVDPYWFHQPLTHYPFFRVETFAMVWIGIKGRASGITTLRIIDKSYVNPSDQVEVEVRYPISKNFAVLGSLANFLALEDKHNLQVSVSVDDSSVQNCVISRTLWFWGIERTDLPVSMKTNDTVMFEFEPLEDKAINHLSSFSNFTTNVVQKAVGGAFTSKSFPELDTEKEFGVVKQPKKIPITKKSKSEVSVIM</sequence>
<gene>
    <name type="ORF">pc4</name>
</gene>
<organism>
    <name type="scientific">Rice stripe virus (isolate T)</name>
    <name type="common">RSV</name>
    <dbReference type="NCBI Taxonomy" id="36394"/>
    <lineage>
        <taxon>Viruses</taxon>
        <taxon>Riboviria</taxon>
        <taxon>Orthornavirae</taxon>
        <taxon>Negarnaviricota</taxon>
        <taxon>Polyploviricotina</taxon>
        <taxon>Ellioviricetes</taxon>
        <taxon>Bunyavirales</taxon>
        <taxon>Phenuiviridae</taxon>
        <taxon>Tenuivirus</taxon>
        <taxon>Tenuivirus oryzaclavatae</taxon>
    </lineage>
</organism>